<keyword id="KW-0217">Developmental protein</keyword>
<keyword id="KW-0903">Direct protein sequencing</keyword>
<keyword id="KW-1015">Disulfide bond</keyword>
<keyword id="KW-0328">Glycosyltransferase</keyword>
<keyword id="KW-0333">Golgi apparatus</keyword>
<keyword id="KW-0464">Manganese</keyword>
<keyword id="KW-0472">Membrane</keyword>
<keyword id="KW-0479">Metal-binding</keyword>
<keyword id="KW-1185">Reference proteome</keyword>
<keyword id="KW-0735">Signal-anchor</keyword>
<keyword id="KW-0808">Transferase</keyword>
<keyword id="KW-0812">Transmembrane</keyword>
<keyword id="KW-1133">Transmembrane helix</keyword>
<sequence>MMSLTVLSPPQRFKRILQAMMLAVAVVYMTLLLYQSAYGYPGIQVPHSQVDALASEAVTTHRDQLLQDYVQSSTPTQPGAGAPAASPTTVIIRKDIRSFNFSDIEVSERPTATLLTELARRSRNGELLRDLSQRAVTATPQPPVTELDDIFISVKTTKNYHDTRLALIIKTWFQLARDQTWFFTDTDDHYYQEKTKGHLINTKCSQGHFRKALCCKMSAELDVFLESGKKWFCHFDDDNYVNVPRLVKLLDEYSPSVDWYLGKPSISSPLEIHLDSKNTTTNKKITFWFATGGAGFCLSRALTLKMLPIAGGGKFISIGDKIRFPDDVTMGFIIEHLLKVPLTVVDNFHSHLEPMEFIRQDTFQDQVSFSYAHMKNQWNVIKVDGFDMKTDPKRFYSLHCQLFPYFSFCPPR</sequence>
<proteinExistence type="evidence at protein level"/>
<gene>
    <name type="primary">fng</name>
    <name type="ORF">CG10580</name>
</gene>
<organism>
    <name type="scientific">Drosophila melanogaster</name>
    <name type="common">Fruit fly</name>
    <dbReference type="NCBI Taxonomy" id="7227"/>
    <lineage>
        <taxon>Eukaryota</taxon>
        <taxon>Metazoa</taxon>
        <taxon>Ecdysozoa</taxon>
        <taxon>Arthropoda</taxon>
        <taxon>Hexapoda</taxon>
        <taxon>Insecta</taxon>
        <taxon>Pterygota</taxon>
        <taxon>Neoptera</taxon>
        <taxon>Endopterygota</taxon>
        <taxon>Diptera</taxon>
        <taxon>Brachycera</taxon>
        <taxon>Muscomorpha</taxon>
        <taxon>Ephydroidea</taxon>
        <taxon>Drosophilidae</taxon>
        <taxon>Drosophila</taxon>
        <taxon>Sophophora</taxon>
    </lineage>
</organism>
<dbReference type="EC" id="2.4.1.222"/>
<dbReference type="EMBL" id="L35770">
    <property type="protein sequence ID" value="AAA64525.1"/>
    <property type="molecule type" value="mRNA"/>
</dbReference>
<dbReference type="EMBL" id="AE014296">
    <property type="protein sequence ID" value="AAF51658.2"/>
    <property type="molecule type" value="Genomic_DNA"/>
</dbReference>
<dbReference type="EMBL" id="AY070927">
    <property type="protein sequence ID" value="AAL48549.1"/>
    <property type="molecule type" value="mRNA"/>
</dbReference>
<dbReference type="PIR" id="A55376">
    <property type="entry name" value="A55376"/>
</dbReference>
<dbReference type="RefSeq" id="NP_524191.1">
    <property type="nucleotide sequence ID" value="NM_079467.3"/>
</dbReference>
<dbReference type="SMR" id="Q24342"/>
<dbReference type="BioGRID" id="65569">
    <property type="interactions" value="19"/>
</dbReference>
<dbReference type="FunCoup" id="Q24342">
    <property type="interactions" value="206"/>
</dbReference>
<dbReference type="IntAct" id="Q24342">
    <property type="interactions" value="1"/>
</dbReference>
<dbReference type="MINT" id="Q24342"/>
<dbReference type="STRING" id="7227.FBpp0077925"/>
<dbReference type="CAZy" id="GT31">
    <property type="family name" value="Glycosyltransferase Family 31"/>
</dbReference>
<dbReference type="PaxDb" id="7227-FBpp0077925"/>
<dbReference type="DNASU" id="40314"/>
<dbReference type="EnsemblMetazoa" id="FBtr0078267">
    <property type="protein sequence ID" value="FBpp0077925"/>
    <property type="gene ID" value="FBgn0011591"/>
</dbReference>
<dbReference type="GeneID" id="40314"/>
<dbReference type="KEGG" id="dme:Dmel_CG10580"/>
<dbReference type="UCSC" id="CG10580-RA">
    <property type="organism name" value="d. melanogaster"/>
</dbReference>
<dbReference type="AGR" id="FB:FBgn0011591"/>
<dbReference type="CTD" id="40314"/>
<dbReference type="FlyBase" id="FBgn0011591">
    <property type="gene designation" value="fng"/>
</dbReference>
<dbReference type="VEuPathDB" id="VectorBase:FBgn0011591"/>
<dbReference type="eggNOG" id="ENOG502QV30">
    <property type="taxonomic scope" value="Eukaryota"/>
</dbReference>
<dbReference type="GeneTree" id="ENSGT00940000164195"/>
<dbReference type="HOGENOM" id="CLU_056611_0_0_1"/>
<dbReference type="InParanoid" id="Q24342"/>
<dbReference type="OMA" id="CPHTAVF"/>
<dbReference type="OrthoDB" id="8959630at2759"/>
<dbReference type="PhylomeDB" id="Q24342"/>
<dbReference type="SignaLink" id="Q24342"/>
<dbReference type="BioGRID-ORCS" id="40314">
    <property type="hits" value="0 hits in 3 CRISPR screens"/>
</dbReference>
<dbReference type="GenomeRNAi" id="40314"/>
<dbReference type="PRO" id="PR:Q24342"/>
<dbReference type="Proteomes" id="UP000000803">
    <property type="component" value="Chromosome 3L"/>
</dbReference>
<dbReference type="Bgee" id="FBgn0011591">
    <property type="expression patterns" value="Expressed in cyst progenitor cell (Drosophila) in testis and 126 other cell types or tissues"/>
</dbReference>
<dbReference type="GO" id="GO:0005737">
    <property type="term" value="C:cytoplasm"/>
    <property type="evidence" value="ECO:0007005"/>
    <property type="project" value="FlyBase"/>
</dbReference>
<dbReference type="GO" id="GO:0005797">
    <property type="term" value="C:Golgi medial cisterna"/>
    <property type="evidence" value="ECO:0000314"/>
    <property type="project" value="FlyBase"/>
</dbReference>
<dbReference type="GO" id="GO:0000139">
    <property type="term" value="C:Golgi membrane"/>
    <property type="evidence" value="ECO:0000314"/>
    <property type="project" value="FlyBase"/>
</dbReference>
<dbReference type="GO" id="GO:0005795">
    <property type="term" value="C:Golgi stack"/>
    <property type="evidence" value="ECO:0000314"/>
    <property type="project" value="FlyBase"/>
</dbReference>
<dbReference type="GO" id="GO:0046872">
    <property type="term" value="F:metal ion binding"/>
    <property type="evidence" value="ECO:0007669"/>
    <property type="project" value="UniProtKB-KW"/>
</dbReference>
<dbReference type="GO" id="GO:0033829">
    <property type="term" value="F:O-fucosylpeptide 3-beta-N-acetylglucosaminyltransferase activity"/>
    <property type="evidence" value="ECO:0000314"/>
    <property type="project" value="FlyBase"/>
</dbReference>
<dbReference type="GO" id="GO:0048749">
    <property type="term" value="P:compound eye development"/>
    <property type="evidence" value="ECO:0000314"/>
    <property type="project" value="FlyBase"/>
</dbReference>
<dbReference type="GO" id="GO:0001745">
    <property type="term" value="P:compound eye morphogenesis"/>
    <property type="evidence" value="ECO:0000315"/>
    <property type="project" value="FlyBase"/>
</dbReference>
<dbReference type="GO" id="GO:0035017">
    <property type="term" value="P:cuticle pattern formation"/>
    <property type="evidence" value="ECO:0000315"/>
    <property type="project" value="FlyBase"/>
</dbReference>
<dbReference type="GO" id="GO:0007450">
    <property type="term" value="P:dorsal/ventral pattern formation, imaginal disc"/>
    <property type="evidence" value="ECO:0000314"/>
    <property type="project" value="FlyBase"/>
</dbReference>
<dbReference type="GO" id="GO:0036099">
    <property type="term" value="P:female germ-line stem cell population maintenance"/>
    <property type="evidence" value="ECO:0000315"/>
    <property type="project" value="FlyBase"/>
</dbReference>
<dbReference type="GO" id="GO:0030707">
    <property type="term" value="P:follicle cell of egg chamber development"/>
    <property type="evidence" value="ECO:0000315"/>
    <property type="project" value="FlyBase"/>
</dbReference>
<dbReference type="GO" id="GO:0007293">
    <property type="term" value="P:germarium-derived egg chamber formation"/>
    <property type="evidence" value="ECO:0000315"/>
    <property type="project" value="FlyBase"/>
</dbReference>
<dbReference type="GO" id="GO:0007480">
    <property type="term" value="P:imaginal disc-derived leg morphogenesis"/>
    <property type="evidence" value="ECO:0000315"/>
    <property type="project" value="FlyBase"/>
</dbReference>
<dbReference type="GO" id="GO:0036011">
    <property type="term" value="P:imaginal disc-derived leg segmentation"/>
    <property type="evidence" value="ECO:0000315"/>
    <property type="project" value="FlyBase"/>
</dbReference>
<dbReference type="GO" id="GO:0008587">
    <property type="term" value="P:imaginal disc-derived wing margin morphogenesis"/>
    <property type="evidence" value="ECO:0000315"/>
    <property type="project" value="FlyBase"/>
</dbReference>
<dbReference type="GO" id="GO:0007476">
    <property type="term" value="P:imaginal disc-derived wing morphogenesis"/>
    <property type="evidence" value="ECO:0000314"/>
    <property type="project" value="FlyBase"/>
</dbReference>
<dbReference type="GO" id="GO:0045746">
    <property type="term" value="P:negative regulation of Notch signaling pathway"/>
    <property type="evidence" value="ECO:0000315"/>
    <property type="project" value="FlyBase"/>
</dbReference>
<dbReference type="GO" id="GO:0045747">
    <property type="term" value="P:positive regulation of Notch signaling pathway"/>
    <property type="evidence" value="ECO:0000315"/>
    <property type="project" value="FlyBase"/>
</dbReference>
<dbReference type="GO" id="GO:0006486">
    <property type="term" value="P:protein glycosylation"/>
    <property type="evidence" value="ECO:0000314"/>
    <property type="project" value="FlyBase"/>
</dbReference>
<dbReference type="GO" id="GO:0008593">
    <property type="term" value="P:regulation of Notch signaling pathway"/>
    <property type="evidence" value="ECO:0000318"/>
    <property type="project" value="GO_Central"/>
</dbReference>
<dbReference type="GO" id="GO:0048100">
    <property type="term" value="P:wing disc anterior/posterior pattern formation"/>
    <property type="evidence" value="ECO:0000315"/>
    <property type="project" value="FlyBase"/>
</dbReference>
<dbReference type="GO" id="GO:0048190">
    <property type="term" value="P:wing disc dorsal/ventral pattern formation"/>
    <property type="evidence" value="ECO:0000315"/>
    <property type="project" value="FlyBase"/>
</dbReference>
<dbReference type="FunFam" id="3.90.550.50:FF:000035">
    <property type="entry name" value="Fringe glycosyltransferase"/>
    <property type="match status" value="1"/>
</dbReference>
<dbReference type="Gene3D" id="3.90.550.50">
    <property type="match status" value="1"/>
</dbReference>
<dbReference type="InterPro" id="IPR017374">
    <property type="entry name" value="Fringe"/>
</dbReference>
<dbReference type="InterPro" id="IPR003378">
    <property type="entry name" value="Fringe-like_glycosylTrfase"/>
</dbReference>
<dbReference type="PANTHER" id="PTHR10811">
    <property type="entry name" value="FRINGE-RELATED"/>
    <property type="match status" value="1"/>
</dbReference>
<dbReference type="Pfam" id="PF02434">
    <property type="entry name" value="Fringe"/>
    <property type="match status" value="1"/>
</dbReference>
<dbReference type="PIRSF" id="PIRSF038073">
    <property type="entry name" value="B-acetylgalactosaminyltfrase"/>
    <property type="match status" value="1"/>
</dbReference>
<feature type="chain" id="PRO_0000219175" description="Fringe glycosyltransferase">
    <location>
        <begin position="1"/>
        <end position="412"/>
    </location>
</feature>
<feature type="topological domain" description="Cytoplasmic" evidence="2">
    <location>
        <begin position="1"/>
        <end position="15"/>
    </location>
</feature>
<feature type="transmembrane region" description="Helical; Signal-anchor for type II membrane protein" evidence="2">
    <location>
        <begin position="16"/>
        <end position="34"/>
    </location>
</feature>
<feature type="topological domain" description="Lumenal" evidence="2">
    <location>
        <begin position="35"/>
        <end position="412"/>
    </location>
</feature>
<feature type="active site" evidence="1">
    <location>
        <position position="327"/>
    </location>
</feature>
<feature type="binding site" evidence="1">
    <location>
        <position position="164"/>
    </location>
    <ligand>
        <name>substrate</name>
    </ligand>
</feature>
<feature type="binding site" evidence="1">
    <location>
        <position position="237"/>
    </location>
    <ligand>
        <name>substrate</name>
    </ligand>
</feature>
<feature type="binding site" evidence="1">
    <location>
        <position position="238"/>
    </location>
    <ligand>
        <name>Mn(2+)</name>
        <dbReference type="ChEBI" id="CHEBI:29035"/>
    </ligand>
</feature>
<feature type="binding site" evidence="1">
    <location>
        <position position="351"/>
    </location>
    <ligand>
        <name>Mn(2+)</name>
        <dbReference type="ChEBI" id="CHEBI:29035"/>
    </ligand>
</feature>
<feature type="disulfide bond" evidence="1">
    <location>
        <begin position="204"/>
        <end position="215"/>
    </location>
</feature>
<feature type="disulfide bond" evidence="1">
    <location>
        <begin position="233"/>
        <end position="297"/>
    </location>
</feature>
<feature type="disulfide bond" evidence="1">
    <location>
        <begin position="400"/>
        <end position="409"/>
    </location>
</feature>
<feature type="mutagenesis site" description="Abolishes activity." evidence="5">
    <original>DDD</original>
    <variation>NNN</variation>
    <location>
        <begin position="236"/>
        <end position="238"/>
    </location>
</feature>
<feature type="mutagenesis site" description="Abolishes activity." evidence="3">
    <original>D</original>
    <variation>A</variation>
    <location>
        <position position="236"/>
    </location>
</feature>
<accession>Q24342</accession>
<accession>Q9VP97</accession>
<name>FNG_DROME</name>
<comment type="function">
    <text evidence="3 4 5 6 7">Glycosyltransferase involved in the elongation of O-linked ligands to activate Notch signaling. Possesses fucose-specific beta-1,3-N-acetylglucosaminyltransferase activity; extends the O-linked fucose on the Notch EGF repeats. Boundary-specific cell-signaling molecule that is responsible for dorsal-ventral cell interactions during wing development.</text>
</comment>
<comment type="catalytic activity">
    <reaction>
        <text>3-O-(alpha-L-fucosyl)-L-threonyl-[EGF-like domain protein] + UDP-N-acetyl-alpha-D-glucosamine = 3-O-(N-acetyl-beta-D-glucosaminyl-(1-&gt;3)-alpha-L-fucosyl)-L-threonyl-[EGF-like domain protein] + UDP + H(+)</text>
        <dbReference type="Rhea" id="RHEA:70531"/>
        <dbReference type="Rhea" id="RHEA-COMP:17922"/>
        <dbReference type="Rhea" id="RHEA-COMP:17923"/>
        <dbReference type="ChEBI" id="CHEBI:15378"/>
        <dbReference type="ChEBI" id="CHEBI:57705"/>
        <dbReference type="ChEBI" id="CHEBI:58223"/>
        <dbReference type="ChEBI" id="CHEBI:189631"/>
        <dbReference type="ChEBI" id="CHEBI:189634"/>
        <dbReference type="EC" id="2.4.1.222"/>
    </reaction>
</comment>
<comment type="catalytic activity">
    <reaction>
        <text>3-O-(alpha-L-fucosyl)-L-seryl-[EGF-like domain protein] + UDP-N-acetyl-alpha-D-glucosamine = 3-O-(N-acetyl-beta-D-glucosaminyl-(1-&gt;3)-alpha-L-fucosyl)-L-seryl-[EGF-like domain protein] + UDP + H(+)</text>
        <dbReference type="Rhea" id="RHEA:70511"/>
        <dbReference type="Rhea" id="RHEA-COMP:17919"/>
        <dbReference type="Rhea" id="RHEA-COMP:17920"/>
        <dbReference type="ChEBI" id="CHEBI:15378"/>
        <dbReference type="ChEBI" id="CHEBI:57705"/>
        <dbReference type="ChEBI" id="CHEBI:58223"/>
        <dbReference type="ChEBI" id="CHEBI:189632"/>
        <dbReference type="ChEBI" id="CHEBI:189633"/>
        <dbReference type="EC" id="2.4.1.222"/>
    </reaction>
</comment>
<comment type="cofactor">
    <cofactor evidence="1">
        <name>Mn(2+)</name>
        <dbReference type="ChEBI" id="CHEBI:29035"/>
    </cofactor>
</comment>
<comment type="subcellular location">
    <subcellularLocation>
        <location evidence="3">Golgi apparatus membrane</location>
        <topology evidence="3">Single-pass type II membrane protein</topology>
    </subcellularLocation>
</comment>
<comment type="tissue specificity">
    <text>Expressed in dorsal cells.</text>
</comment>
<comment type="similarity">
    <text evidence="8">Belongs to the glycosyltransferase 31 family.</text>
</comment>
<evidence type="ECO:0000250" key="1"/>
<evidence type="ECO:0000255" key="2"/>
<evidence type="ECO:0000269" key="3">
    <source>
    </source>
</evidence>
<evidence type="ECO:0000269" key="4">
    <source>
    </source>
</evidence>
<evidence type="ECO:0000269" key="5">
    <source>
    </source>
</evidence>
<evidence type="ECO:0000269" key="6">
    <source>
    </source>
</evidence>
<evidence type="ECO:0000269" key="7">
    <source>
    </source>
</evidence>
<evidence type="ECO:0000305" key="8"/>
<reference key="1">
    <citation type="journal article" date="1994" name="Cell">
        <title>Fringe, a boundary-specific signaling molecule, mediates interactions between dorsal and ventral cells during Drosophila wing development.</title>
        <authorList>
            <person name="Irvine K.D."/>
            <person name="Wieschaus E."/>
        </authorList>
    </citation>
    <scope>NUCLEOTIDE SEQUENCE [MRNA]</scope>
    <scope>FUNCTION</scope>
    <source>
        <tissue>Wing imaginal disk</tissue>
    </source>
</reference>
<reference key="2">
    <citation type="journal article" date="2000" name="Science">
        <title>The genome sequence of Drosophila melanogaster.</title>
        <authorList>
            <person name="Adams M.D."/>
            <person name="Celniker S.E."/>
            <person name="Holt R.A."/>
            <person name="Evans C.A."/>
            <person name="Gocayne J.D."/>
            <person name="Amanatides P.G."/>
            <person name="Scherer S.E."/>
            <person name="Li P.W."/>
            <person name="Hoskins R.A."/>
            <person name="Galle R.F."/>
            <person name="George R.A."/>
            <person name="Lewis S.E."/>
            <person name="Richards S."/>
            <person name="Ashburner M."/>
            <person name="Henderson S.N."/>
            <person name="Sutton G.G."/>
            <person name="Wortman J.R."/>
            <person name="Yandell M.D."/>
            <person name="Zhang Q."/>
            <person name="Chen L.X."/>
            <person name="Brandon R.C."/>
            <person name="Rogers Y.-H.C."/>
            <person name="Blazej R.G."/>
            <person name="Champe M."/>
            <person name="Pfeiffer B.D."/>
            <person name="Wan K.H."/>
            <person name="Doyle C."/>
            <person name="Baxter E.G."/>
            <person name="Helt G."/>
            <person name="Nelson C.R."/>
            <person name="Miklos G.L.G."/>
            <person name="Abril J.F."/>
            <person name="Agbayani A."/>
            <person name="An H.-J."/>
            <person name="Andrews-Pfannkoch C."/>
            <person name="Baldwin D."/>
            <person name="Ballew R.M."/>
            <person name="Basu A."/>
            <person name="Baxendale J."/>
            <person name="Bayraktaroglu L."/>
            <person name="Beasley E.M."/>
            <person name="Beeson K.Y."/>
            <person name="Benos P.V."/>
            <person name="Berman B.P."/>
            <person name="Bhandari D."/>
            <person name="Bolshakov S."/>
            <person name="Borkova D."/>
            <person name="Botchan M.R."/>
            <person name="Bouck J."/>
            <person name="Brokstein P."/>
            <person name="Brottier P."/>
            <person name="Burtis K.C."/>
            <person name="Busam D.A."/>
            <person name="Butler H."/>
            <person name="Cadieu E."/>
            <person name="Center A."/>
            <person name="Chandra I."/>
            <person name="Cherry J.M."/>
            <person name="Cawley S."/>
            <person name="Dahlke C."/>
            <person name="Davenport L.B."/>
            <person name="Davies P."/>
            <person name="de Pablos B."/>
            <person name="Delcher A."/>
            <person name="Deng Z."/>
            <person name="Mays A.D."/>
            <person name="Dew I."/>
            <person name="Dietz S.M."/>
            <person name="Dodson K."/>
            <person name="Doup L.E."/>
            <person name="Downes M."/>
            <person name="Dugan-Rocha S."/>
            <person name="Dunkov B.C."/>
            <person name="Dunn P."/>
            <person name="Durbin K.J."/>
            <person name="Evangelista C.C."/>
            <person name="Ferraz C."/>
            <person name="Ferriera S."/>
            <person name="Fleischmann W."/>
            <person name="Fosler C."/>
            <person name="Gabrielian A.E."/>
            <person name="Garg N.S."/>
            <person name="Gelbart W.M."/>
            <person name="Glasser K."/>
            <person name="Glodek A."/>
            <person name="Gong F."/>
            <person name="Gorrell J.H."/>
            <person name="Gu Z."/>
            <person name="Guan P."/>
            <person name="Harris M."/>
            <person name="Harris N.L."/>
            <person name="Harvey D.A."/>
            <person name="Heiman T.J."/>
            <person name="Hernandez J.R."/>
            <person name="Houck J."/>
            <person name="Hostin D."/>
            <person name="Houston K.A."/>
            <person name="Howland T.J."/>
            <person name="Wei M.-H."/>
            <person name="Ibegwam C."/>
            <person name="Jalali M."/>
            <person name="Kalush F."/>
            <person name="Karpen G.H."/>
            <person name="Ke Z."/>
            <person name="Kennison J.A."/>
            <person name="Ketchum K.A."/>
            <person name="Kimmel B.E."/>
            <person name="Kodira C.D."/>
            <person name="Kraft C.L."/>
            <person name="Kravitz S."/>
            <person name="Kulp D."/>
            <person name="Lai Z."/>
            <person name="Lasko P."/>
            <person name="Lei Y."/>
            <person name="Levitsky A.A."/>
            <person name="Li J.H."/>
            <person name="Li Z."/>
            <person name="Liang Y."/>
            <person name="Lin X."/>
            <person name="Liu X."/>
            <person name="Mattei B."/>
            <person name="McIntosh T.C."/>
            <person name="McLeod M.P."/>
            <person name="McPherson D."/>
            <person name="Merkulov G."/>
            <person name="Milshina N.V."/>
            <person name="Mobarry C."/>
            <person name="Morris J."/>
            <person name="Moshrefi A."/>
            <person name="Mount S.M."/>
            <person name="Moy M."/>
            <person name="Murphy B."/>
            <person name="Murphy L."/>
            <person name="Muzny D.M."/>
            <person name="Nelson D.L."/>
            <person name="Nelson D.R."/>
            <person name="Nelson K.A."/>
            <person name="Nixon K."/>
            <person name="Nusskern D.R."/>
            <person name="Pacleb J.M."/>
            <person name="Palazzolo M."/>
            <person name="Pittman G.S."/>
            <person name="Pan S."/>
            <person name="Pollard J."/>
            <person name="Puri V."/>
            <person name="Reese M.G."/>
            <person name="Reinert K."/>
            <person name="Remington K."/>
            <person name="Saunders R.D.C."/>
            <person name="Scheeler F."/>
            <person name="Shen H."/>
            <person name="Shue B.C."/>
            <person name="Siden-Kiamos I."/>
            <person name="Simpson M."/>
            <person name="Skupski M.P."/>
            <person name="Smith T.J."/>
            <person name="Spier E."/>
            <person name="Spradling A.C."/>
            <person name="Stapleton M."/>
            <person name="Strong R."/>
            <person name="Sun E."/>
            <person name="Svirskas R."/>
            <person name="Tector C."/>
            <person name="Turner R."/>
            <person name="Venter E."/>
            <person name="Wang A.H."/>
            <person name="Wang X."/>
            <person name="Wang Z.-Y."/>
            <person name="Wassarman D.A."/>
            <person name="Weinstock G.M."/>
            <person name="Weissenbach J."/>
            <person name="Williams S.M."/>
            <person name="Woodage T."/>
            <person name="Worley K.C."/>
            <person name="Wu D."/>
            <person name="Yang S."/>
            <person name="Yao Q.A."/>
            <person name="Ye J."/>
            <person name="Yeh R.-F."/>
            <person name="Zaveri J.S."/>
            <person name="Zhan M."/>
            <person name="Zhang G."/>
            <person name="Zhao Q."/>
            <person name="Zheng L."/>
            <person name="Zheng X.H."/>
            <person name="Zhong F.N."/>
            <person name="Zhong W."/>
            <person name="Zhou X."/>
            <person name="Zhu S.C."/>
            <person name="Zhu X."/>
            <person name="Smith H.O."/>
            <person name="Gibbs R.A."/>
            <person name="Myers E.W."/>
            <person name="Rubin G.M."/>
            <person name="Venter J.C."/>
        </authorList>
    </citation>
    <scope>NUCLEOTIDE SEQUENCE [LARGE SCALE GENOMIC DNA]</scope>
    <source>
        <strain>Berkeley</strain>
    </source>
</reference>
<reference key="3">
    <citation type="journal article" date="2002" name="Genome Biol.">
        <title>Annotation of the Drosophila melanogaster euchromatic genome: a systematic review.</title>
        <authorList>
            <person name="Misra S."/>
            <person name="Crosby M.A."/>
            <person name="Mungall C.J."/>
            <person name="Matthews B.B."/>
            <person name="Campbell K.S."/>
            <person name="Hradecky P."/>
            <person name="Huang Y."/>
            <person name="Kaminker J.S."/>
            <person name="Millburn G.H."/>
            <person name="Prochnik S.E."/>
            <person name="Smith C.D."/>
            <person name="Tupy J.L."/>
            <person name="Whitfield E.J."/>
            <person name="Bayraktaroglu L."/>
            <person name="Berman B.P."/>
            <person name="Bettencourt B.R."/>
            <person name="Celniker S.E."/>
            <person name="de Grey A.D.N.J."/>
            <person name="Drysdale R.A."/>
            <person name="Harris N.L."/>
            <person name="Richter J."/>
            <person name="Russo S."/>
            <person name="Schroeder A.J."/>
            <person name="Shu S.Q."/>
            <person name="Stapleton M."/>
            <person name="Yamada C."/>
            <person name="Ashburner M."/>
            <person name="Gelbart W.M."/>
            <person name="Rubin G.M."/>
            <person name="Lewis S.E."/>
        </authorList>
    </citation>
    <scope>GENOME REANNOTATION</scope>
    <source>
        <strain>Berkeley</strain>
    </source>
</reference>
<reference key="4">
    <citation type="journal article" date="2002" name="Genome Biol.">
        <title>A Drosophila full-length cDNA resource.</title>
        <authorList>
            <person name="Stapleton M."/>
            <person name="Carlson J.W."/>
            <person name="Brokstein P."/>
            <person name="Yu C."/>
            <person name="Champe M."/>
            <person name="George R.A."/>
            <person name="Guarin H."/>
            <person name="Kronmiller B."/>
            <person name="Pacleb J.M."/>
            <person name="Park S."/>
            <person name="Wan K.H."/>
            <person name="Rubin G.M."/>
            <person name="Celniker S.E."/>
        </authorList>
    </citation>
    <scope>NUCLEOTIDE SEQUENCE [LARGE SCALE MRNA]</scope>
    <source>
        <strain>Berkeley</strain>
        <tissue>Embryo</tissue>
    </source>
</reference>
<reference key="5">
    <citation type="journal article" date="1997" name="Development">
        <title>A family of mammalian Fringe genes implicated in boundary determination and the Notch pathway.</title>
        <authorList>
            <person name="Johnston S.H."/>
            <person name="Rauskolb C."/>
            <person name="Wilson R."/>
            <person name="Prabhakaran B."/>
            <person name="Irvine K.D."/>
            <person name="Vogt T.F."/>
        </authorList>
    </citation>
    <scope>PROTEIN SEQUENCE OF 40-44</scope>
</reference>
<reference key="6">
    <citation type="journal article" date="1997" name="Cell">
        <title>Secreted fringe-like signaling molecules may be glycosyltransferases.</title>
        <authorList>
            <person name="Yuan Y.P."/>
            <person name="Schultz J."/>
            <person name="Mlodzik M."/>
            <person name="Bork P."/>
        </authorList>
    </citation>
    <scope>SIMILARITY TO THE LEX1 FAMILY</scope>
</reference>
<reference key="7">
    <citation type="journal article" date="2000" name="Nature">
        <title>Fringe is a glycosyltransferase that modifies Notch.</title>
        <authorList>
            <person name="Moloney D.J."/>
            <person name="Panin V.M."/>
            <person name="Johnston S.H."/>
            <person name="Chen J."/>
            <person name="Shao L."/>
            <person name="Wilson R."/>
            <person name="Wang Y."/>
            <person name="Stanley P."/>
            <person name="Irvine K.D."/>
            <person name="Haltiwanger R.S."/>
            <person name="Vogt T.F."/>
        </authorList>
    </citation>
    <scope>FUNCTION</scope>
</reference>
<reference key="8">
    <citation type="journal article" date="2000" name="Nature">
        <title>Glycosyltransferase activity of Fringe modulates Notch-Delta interactions.</title>
        <authorList>
            <person name="Bruckner K."/>
            <person name="Perez L."/>
            <person name="Clausen H."/>
            <person name="Cohen S."/>
        </authorList>
    </citation>
    <scope>FUNCTION</scope>
    <scope>MUTAGENESIS OF 236-ASP--ASP-238</scope>
</reference>
<reference key="9">
    <citation type="journal article" date="2000" name="Curr. Biol.">
        <title>The notch signalling regulator fringe acts in the Golgi apparatus and requires the glycosyltransferase signature motif DXD.</title>
        <authorList>
            <person name="Munro S."/>
            <person name="Freeman M."/>
        </authorList>
    </citation>
    <scope>FUNCTION</scope>
    <scope>SUBCELLULAR LOCATION</scope>
    <scope>MUTAGENESIS OF ASP-236</scope>
</reference>
<reference key="10">
    <citation type="journal article" date="2000" name="Curr. Biol.">
        <title>Notch signaling: Fringe really is a glycosyltransferase.</title>
        <authorList>
            <person name="Blair S.S."/>
        </authorList>
    </citation>
    <scope>FUNCTION</scope>
</reference>
<protein>
    <recommendedName>
        <fullName>Fringe glycosyltransferase</fullName>
        <ecNumber>2.4.1.222</ecNumber>
    </recommendedName>
    <alternativeName>
        <fullName>O-fucosylpeptide 3-beta-N-acetylglucosaminyltransferase</fullName>
    </alternativeName>
</protein>